<proteinExistence type="inferred from homology"/>
<organism>
    <name type="scientific">Shewanella oneidensis (strain ATCC 700550 / JCM 31522 / CIP 106686 / LMG 19005 / NCIMB 14063 / MR-1)</name>
    <dbReference type="NCBI Taxonomy" id="211586"/>
    <lineage>
        <taxon>Bacteria</taxon>
        <taxon>Pseudomonadati</taxon>
        <taxon>Pseudomonadota</taxon>
        <taxon>Gammaproteobacteria</taxon>
        <taxon>Alteromonadales</taxon>
        <taxon>Shewanellaceae</taxon>
        <taxon>Shewanella</taxon>
    </lineage>
</organism>
<keyword id="KW-1185">Reference proteome</keyword>
<keyword id="KW-0732">Signal</keyword>
<feature type="signal peptide" evidence="1">
    <location>
        <begin position="1"/>
        <end position="23"/>
    </location>
</feature>
<feature type="chain" id="PRO_0000022698" description="Uncharacterized protein SO_0736">
    <location>
        <begin position="24"/>
        <end position="264"/>
    </location>
</feature>
<feature type="sequence conflict" description="In Ref. 1; AAA71988." evidence="2" ref="1">
    <original>LQQTPEFAGQKIQPIANLEPLTSYGYLHKRHNQLAEPLADQLKKMKQEGLFERYKQQAKASFEDHAE</original>
    <variation>KTLFKTDA</variation>
    <location>
        <begin position="198"/>
        <end position="264"/>
    </location>
</feature>
<evidence type="ECO:0000255" key="1"/>
<evidence type="ECO:0000305" key="2"/>
<dbReference type="EMBL" id="L13868">
    <property type="protein sequence ID" value="AAA71988.1"/>
    <property type="molecule type" value="Unassigned_DNA"/>
</dbReference>
<dbReference type="EMBL" id="AE014299">
    <property type="protein sequence ID" value="AAN53814.1"/>
    <property type="molecule type" value="Genomic_DNA"/>
</dbReference>
<dbReference type="PIR" id="B49910">
    <property type="entry name" value="B49910"/>
</dbReference>
<dbReference type="RefSeq" id="NP_716369.1">
    <property type="nucleotide sequence ID" value="NC_004347.2"/>
</dbReference>
<dbReference type="RefSeq" id="WP_011071045.1">
    <property type="nucleotide sequence ID" value="NC_004347.2"/>
</dbReference>
<dbReference type="SMR" id="P46149"/>
<dbReference type="STRING" id="211586.SO_0736"/>
<dbReference type="PaxDb" id="211586-SO_0736"/>
<dbReference type="KEGG" id="son:SO_0736"/>
<dbReference type="PATRIC" id="fig|211586.12.peg.705"/>
<dbReference type="eggNOG" id="COG0834">
    <property type="taxonomic scope" value="Bacteria"/>
</dbReference>
<dbReference type="HOGENOM" id="CLU_080965_1_0_6"/>
<dbReference type="OrthoDB" id="8255022at2"/>
<dbReference type="BioCyc" id="SONE211586:G1GMP-689-MONOMER"/>
<dbReference type="Proteomes" id="UP000008186">
    <property type="component" value="Chromosome"/>
</dbReference>
<dbReference type="GO" id="GO:0030288">
    <property type="term" value="C:outer membrane-bounded periplasmic space"/>
    <property type="evidence" value="ECO:0000318"/>
    <property type="project" value="GO_Central"/>
</dbReference>
<dbReference type="GO" id="GO:0016597">
    <property type="term" value="F:amino acid binding"/>
    <property type="evidence" value="ECO:0000318"/>
    <property type="project" value="GO_Central"/>
</dbReference>
<dbReference type="Gene3D" id="3.40.190.10">
    <property type="entry name" value="Periplasmic binding protein-like II"/>
    <property type="match status" value="2"/>
</dbReference>
<dbReference type="SUPFAM" id="SSF53850">
    <property type="entry name" value="Periplasmic binding protein-like II"/>
    <property type="match status" value="1"/>
</dbReference>
<name>Y736_SHEON</name>
<reference key="1">
    <citation type="journal article" date="1993" name="J. Bacteriol.">
        <title>Sequence and genetic characterization of etrA, an fnr analog that regulates anaerobic respiration in Shewanella putrefaciens MR-1.</title>
        <authorList>
            <person name="Saffarini D.A."/>
            <person name="Nealson K.H."/>
        </authorList>
    </citation>
    <scope>NUCLEOTIDE SEQUENCE [GENOMIC DNA]</scope>
    <source>
        <strain>ATCC 700550 / JCM 31522 / CIP 106686 / LMG 19005 / NCIMB 14063 / MR-1</strain>
    </source>
</reference>
<reference key="2">
    <citation type="journal article" date="2002" name="Nat. Biotechnol.">
        <title>Genome sequence of the dissimilatory metal ion-reducing bacterium Shewanella oneidensis.</title>
        <authorList>
            <person name="Heidelberg J.F."/>
            <person name="Paulsen I.T."/>
            <person name="Nelson K.E."/>
            <person name="Gaidos E.J."/>
            <person name="Nelson W.C."/>
            <person name="Read T.D."/>
            <person name="Eisen J.A."/>
            <person name="Seshadri R."/>
            <person name="Ward N.L."/>
            <person name="Methe B.A."/>
            <person name="Clayton R.A."/>
            <person name="Meyer T."/>
            <person name="Tsapin A."/>
            <person name="Scott J."/>
            <person name="Beanan M.J."/>
            <person name="Brinkac L.M."/>
            <person name="Daugherty S.C."/>
            <person name="DeBoy R.T."/>
            <person name="Dodson R.J."/>
            <person name="Durkin A.S."/>
            <person name="Haft D.H."/>
            <person name="Kolonay J.F."/>
            <person name="Madupu R."/>
            <person name="Peterson J.D."/>
            <person name="Umayam L.A."/>
            <person name="White O."/>
            <person name="Wolf A.M."/>
            <person name="Vamathevan J.J."/>
            <person name="Weidman J.F."/>
            <person name="Impraim M."/>
            <person name="Lee K."/>
            <person name="Berry K.J."/>
            <person name="Lee C."/>
            <person name="Mueller J."/>
            <person name="Khouri H.M."/>
            <person name="Gill J."/>
            <person name="Utterback T.R."/>
            <person name="McDonald L.A."/>
            <person name="Feldblyum T.V."/>
            <person name="Smith H.O."/>
            <person name="Venter J.C."/>
            <person name="Nealson K.H."/>
            <person name="Fraser C.M."/>
        </authorList>
    </citation>
    <scope>NUCLEOTIDE SEQUENCE [LARGE SCALE GENOMIC DNA]</scope>
    <source>
        <strain>ATCC 700550 / JCM 31522 / CIP 106686 / LMG 19005 / NCIMB 14063 / MR-1</strain>
    </source>
</reference>
<sequence>MQQWNLTISNILIGLFFCFSAQASEIAPSPTISAVQNKPTITMAFYEDPKHSFHFKWAELIYTHALAQLGYRFSYELVPAIRASKMLESGKVGGEPGRIFSYGDKVSNVIRIEEPVIETQLIAFTSNPNIKITHWQSLTNTGYKVEYYRGILRAEQILNELIPETQLSESSSPITSFRKLLHDRIDIYIDSEISLQILQQTPEFAGQKIQPIANLEPLTSYGYLHKRHNQLAEPLADQLKKMKQEGLFERYKQQAKASFEDHAE</sequence>
<gene>
    <name type="ordered locus">SO_0736</name>
</gene>
<accession>P46149</accession>
<protein>
    <recommendedName>
        <fullName>Uncharacterized protein SO_0736</fullName>
    </recommendedName>
</protein>